<reference key="1">
    <citation type="submission" date="1997-12" db="EMBL/GenBank/DDBJ databases">
        <title>Sequence analysis of group C human adenoviruses type 1 and 6 for five genes of region E3.</title>
        <authorList>
            <person name="Reichmann H."/>
            <person name="Schaarschmidt E."/>
            <person name="Geisler B."/>
            <person name="Hausmann J."/>
            <person name="Ortmann D."/>
            <person name="Bauer U."/>
            <person name="Flunker G."/>
            <person name="Seidel W."/>
        </authorList>
    </citation>
    <scope>NUCLEOTIDE SEQUENCE [GENOMIC DNA]</scope>
</reference>
<organism>
    <name type="scientific">Human adenovirus C serotype 6</name>
    <name type="common">HAdV-6</name>
    <name type="synonym">Human adenovirus 6</name>
    <dbReference type="NCBI Taxonomy" id="10534"/>
    <lineage>
        <taxon>Viruses</taxon>
        <taxon>Varidnaviria</taxon>
        <taxon>Bamfordvirae</taxon>
        <taxon>Preplasmiviricota</taxon>
        <taxon>Tectiliviricetes</taxon>
        <taxon>Rowavirales</taxon>
        <taxon>Adenoviridae</taxon>
        <taxon>Mastadenovirus</taxon>
        <taxon>Human mastadenovirus C</taxon>
    </lineage>
</organism>
<proteinExistence type="evidence at protein level"/>
<organismHost>
    <name type="scientific">Homo sapiens</name>
    <name type="common">Human</name>
    <dbReference type="NCBI Taxonomy" id="9606"/>
</organismHost>
<evidence type="ECO:0000250" key="1"/>
<evidence type="ECO:0000255" key="2"/>
<evidence type="ECO:0000305" key="3"/>
<evidence type="ECO:0007829" key="4">
    <source>
        <dbReference type="PDB" id="4E5X"/>
    </source>
</evidence>
<feature type="signal peptide" evidence="1">
    <location>
        <begin position="1"/>
        <end position="17"/>
    </location>
</feature>
<feature type="chain" id="PRO_0000036485" description="Early E3 18.5 kDa glycoprotein">
    <location>
        <begin position="18"/>
        <end position="159"/>
    </location>
</feature>
<feature type="topological domain" description="Lumenal" evidence="2">
    <location>
        <begin position="18"/>
        <end position="123"/>
    </location>
</feature>
<feature type="transmembrane region" description="Helical" evidence="2">
    <location>
        <begin position="124"/>
        <end position="144"/>
    </location>
</feature>
<feature type="topological domain" description="Cytoplasmic" evidence="2">
    <location>
        <begin position="145"/>
        <end position="159"/>
    </location>
</feature>
<feature type="short sequence motif" description="Di-lysine motif" evidence="1">
    <location>
        <begin position="156"/>
        <end position="159"/>
    </location>
</feature>
<feature type="glycosylation site" description="N-linked (GlcNAc...) asparagine; by host" evidence="2">
    <location>
        <position position="29"/>
    </location>
</feature>
<feature type="glycosylation site" description="N-linked (GlcNAc...) asparagine; by host" evidence="2">
    <location>
        <position position="78"/>
    </location>
</feature>
<feature type="disulfide bond" evidence="1">
    <location>
        <begin position="28"/>
        <end position="45"/>
    </location>
</feature>
<feature type="disulfide bond" evidence="1">
    <location>
        <begin position="39"/>
        <end position="100"/>
    </location>
</feature>
<feature type="strand" evidence="4">
    <location>
        <begin position="27"/>
        <end position="35"/>
    </location>
</feature>
<feature type="strand" evidence="4">
    <location>
        <begin position="38"/>
        <end position="46"/>
    </location>
</feature>
<feature type="strand" evidence="4">
    <location>
        <begin position="48"/>
        <end position="56"/>
    </location>
</feature>
<feature type="strand" evidence="4">
    <location>
        <begin position="59"/>
        <end position="69"/>
    </location>
</feature>
<feature type="strand" evidence="4">
    <location>
        <begin position="76"/>
        <end position="83"/>
    </location>
</feature>
<feature type="strand" evidence="4">
    <location>
        <begin position="86"/>
        <end position="93"/>
    </location>
</feature>
<feature type="helix" evidence="4">
    <location>
        <begin position="96"/>
        <end position="103"/>
    </location>
</feature>
<feature type="helix" evidence="4">
    <location>
        <begin position="105"/>
        <end position="109"/>
    </location>
</feature>
<keyword id="KW-0002">3D-structure</keyword>
<keyword id="KW-1015">Disulfide bond</keyword>
<keyword id="KW-0244">Early protein</keyword>
<keyword id="KW-0325">Glycoprotein</keyword>
<keyword id="KW-1038">Host endoplasmic reticulum</keyword>
<keyword id="KW-1043">Host membrane</keyword>
<keyword id="KW-0945">Host-virus interaction</keyword>
<keyword id="KW-1080">Inhibition of host adaptive immune response by virus</keyword>
<keyword id="KW-1108">Inhibition of host tapasin by virus</keyword>
<keyword id="KW-0430">Lectin</keyword>
<keyword id="KW-0465">Mannose-binding</keyword>
<keyword id="KW-0472">Membrane</keyword>
<keyword id="KW-0732">Signal</keyword>
<keyword id="KW-0812">Transmembrane</keyword>
<keyword id="KW-1133">Transmembrane helix</keyword>
<keyword id="KW-0899">Viral immunoevasion</keyword>
<name>E3GL_ADE06</name>
<comment type="function">
    <text evidence="1">Binds and retains class I heavy chains in the endoplasmic reticulum during the early period of virus infection, thereby impairing their transport to the cell surface. Also delays the expression of class I alleles that it cannot affect by direct retention. Binds transporters associated with antigen processing (TAP) and acts as a tapasin inhibitor, preventing class I/TAP association. In consequence, infected cells are masked for immune recognition by cytotoxic T-lymphocytes (By similarity).</text>
</comment>
<comment type="subcellular location">
    <subcellularLocation>
        <location>Host endoplasmic reticulum membrane</location>
        <topology>Single-pass type I membrane protein</topology>
    </subcellularLocation>
</comment>
<comment type="developmental stage">
    <text>Expressed at early period of virus infection.</text>
</comment>
<comment type="domain">
    <text>The lumenal domain binds directly to the peptide-binding domain of class I molecules.</text>
</comment>
<comment type="domain">
    <text evidence="1">The di-lysine motif confers endoplasmic reticulum localization for type I membrane proteins.</text>
</comment>
<comment type="PTM">
    <text evidence="1">Both disulfide bonds are absolutely critical for the interaction with MHC antigens.</text>
</comment>
<comment type="PTM">
    <text evidence="1">N-glycosylated; high-mannose.</text>
</comment>
<comment type="similarity">
    <text evidence="3">Belongs to the adenoviridae E19 family.</text>
</comment>
<accession>P68979</accession>
<accession>P03251</accession>
<protein>
    <recommendedName>
        <fullName>Early E3 18.5 kDa glycoprotein</fullName>
    </recommendedName>
    <alternativeName>
        <fullName>E3-19K</fullName>
    </alternativeName>
    <alternativeName>
        <fullName>E3gp 19 kDa</fullName>
        <shortName>E19</shortName>
    </alternativeName>
    <alternativeName>
        <fullName>GP19K</fullName>
    </alternativeName>
</protein>
<sequence>MRYMILGLLALAAVCSAAKKVEFKEPACNVTFKSEANECTTLIKCTTEHEKLIIRHKDKIGKYAVYAIWQPGDTNDYNVTVFQGENRKTFMYKFPFYEMCDITMYMSKQYKLWPPQKCLENTGTFCSTALLITALALVCTLLYLKYKSRRSFIDEKKMP</sequence>
<dbReference type="EMBL" id="Y16037">
    <property type="protein sequence ID" value="CAA75990.1"/>
    <property type="molecule type" value="Genomic_DNA"/>
</dbReference>
<dbReference type="PDB" id="4E5X">
    <property type="method" value="X-ray"/>
    <property type="resolution" value="1.95 A"/>
    <property type="chains" value="G/H=18-117"/>
</dbReference>
<dbReference type="PDBsum" id="4E5X"/>
<dbReference type="SMR" id="P68979"/>
<dbReference type="EvolutionaryTrace" id="P68979"/>
<dbReference type="GO" id="GO:0044167">
    <property type="term" value="C:host cell endoplasmic reticulum membrane"/>
    <property type="evidence" value="ECO:0007669"/>
    <property type="project" value="UniProtKB-SubCell"/>
</dbReference>
<dbReference type="GO" id="GO:0016020">
    <property type="term" value="C:membrane"/>
    <property type="evidence" value="ECO:0007669"/>
    <property type="project" value="UniProtKB-KW"/>
</dbReference>
<dbReference type="GO" id="GO:0005537">
    <property type="term" value="F:D-mannose binding"/>
    <property type="evidence" value="ECO:0007669"/>
    <property type="project" value="UniProtKB-KW"/>
</dbReference>
<dbReference type="GO" id="GO:0046776">
    <property type="term" value="P:symbiont-mediated suppression of host antigen processing and presentation of peptide antigen via MHC class I"/>
    <property type="evidence" value="ECO:0007669"/>
    <property type="project" value="UniProtKB-KW"/>
</dbReference>
<dbReference type="FunFam" id="2.60.40.3530:FF:000002">
    <property type="entry name" value="Early E3 18.5 kDa glycoprotein"/>
    <property type="match status" value="1"/>
</dbReference>
<dbReference type="Gene3D" id="2.60.40.3530">
    <property type="match status" value="1"/>
</dbReference>
<dbReference type="InterPro" id="IPR006965">
    <property type="entry name" value="Adenovirus_Gp19K"/>
</dbReference>
<dbReference type="InterPro" id="IPR038710">
    <property type="entry name" value="Adenovirus_Gp19K_sf"/>
</dbReference>
<dbReference type="Pfam" id="PF04881">
    <property type="entry name" value="Adeno_GP19K"/>
    <property type="match status" value="1"/>
</dbReference>